<reference key="1">
    <citation type="journal article" date="2020" name="Chem. Commun. (Camb.)">
        <title>Biosynthesis of oxygenated brasilane terpene glycosides involves a promiscuous N-acetylglucosamine transferase.</title>
        <authorList>
            <person name="Feng J."/>
            <person name="Surup F."/>
            <person name="Hauser M."/>
            <person name="Miller A."/>
            <person name="Wennrich J.P."/>
            <person name="Stadler M."/>
            <person name="Cox R.J."/>
            <person name="Kuhnert E."/>
        </authorList>
    </citation>
    <scope>NUCLEOTIDE SEQUENCE [GENOMIC DNA]</scope>
    <scope>FUNCTION</scope>
    <scope>CATALYTIC ACTIVITY</scope>
    <scope>PATHWAY</scope>
    <source>
        <strain>DSM 103480 / CBS 140778</strain>
    </source>
</reference>
<gene>
    <name evidence="3" type="primary">braB</name>
</gene>
<comment type="function">
    <text evidence="2">O-glycosyltransferase; part of the gene cluster that mediates the biosynthesis of the brasilane terpene glycosides brasilane D and E (PubMed:32936132). The biosynthesis starts with the activity of the terpene cyclase braA that converts farnesyl pyrophosphate into the sesquiterpene alcohol trichobrasilenol (PubMed:32936132). Subsequently, trichobrasilenol is glycosylated by the O-glycosyltransferase braB putatively using UDP-GlcNAc as sugar donor to yield brasilane A (PubMed:32936132). The latter then undergoes two rounds of oxidation performed by the cytochrome P450 monooxygenase braC (PubMed:32936132). In the first round braC hydroxylates C-12 forming brasilane D, which serves as substrate in the second round to establish the epoxide at the bond between C-5 and C-10 and oxidize the alcohol at C-12 to an aldehyde leading to the final product brasilane E (PubMed:32936132). BraB is also able to glycosylate geraniol, linalool, perillyl alcohol, 3,4-dichlorophenol and, to a lesser extend, benzyl alcohol (PubMed:32936132).</text>
</comment>
<comment type="pathway">
    <text evidence="2">Secondary metabolite biosynthesis.</text>
</comment>
<comment type="similarity">
    <text evidence="4">Belongs to the afumC glycosyltransferase family.</text>
</comment>
<proteinExistence type="evidence at protein level"/>
<feature type="chain" id="PRO_0000453908" description="O-glycosyltransferase braB">
    <location>
        <begin position="1"/>
        <end position="421"/>
    </location>
</feature>
<feature type="region of interest" description="Disordered" evidence="1">
    <location>
        <begin position="1"/>
        <end position="26"/>
    </location>
</feature>
<feature type="compositionally biased region" description="Polar residues" evidence="1">
    <location>
        <begin position="13"/>
        <end position="22"/>
    </location>
</feature>
<sequence>MVPSVMEGAPQLGITSTDTSSAGVPPGLKLIPTDRLDRRTDEEIAAWLQTRHPVTSDKNVWAFWHNGYTNMPPWVQRNIINWVRRLGPDWTVHLLDRVDGSATNVSHYVDSSFFPECFNNNTMDGPTVGQHSGDLVRLPLLWLYGGIWIDAGSFLFRHVEDICWNKIEDPESPYEMAGFVIEMRPGVEVMLNGFIAAKRGNPFIKRWLEIFKKLWDGATNVQGFHKHPLLRHLPMLCPPIDKLNLPPQGLNVVMEQFTDYMSQIMSFERLRKLVDPSDGFNGPEYYSNKMLLCSALQETFYFQLVTEWSGTKQFNLLSTKRKGEGVVKDENWHAAENFVHDALANTATMKLSHGPPGALDSFLADLWDSEEHHGKDNEDGTFAAYLRYGSVHFDQTREMVPIKMGWPDEEVLEAGVLEPKK</sequence>
<protein>
    <recommendedName>
        <fullName evidence="3">O-glycosyltransferase braB</fullName>
        <ecNumber evidence="2">2.4.1.-</ecNumber>
    </recommendedName>
    <alternativeName>
        <fullName evidence="3">Brasilane terpene glycosides biosynthesis cluster protein B</fullName>
    </alternativeName>
</protein>
<organism>
    <name type="scientific">Annulohypoxylon truncatum</name>
    <name type="common">Hypoxylon truncatum</name>
    <dbReference type="NCBI Taxonomy" id="327061"/>
    <lineage>
        <taxon>Eukaryota</taxon>
        <taxon>Fungi</taxon>
        <taxon>Dikarya</taxon>
        <taxon>Ascomycota</taxon>
        <taxon>Pezizomycotina</taxon>
        <taxon>Sordariomycetes</taxon>
        <taxon>Xylariomycetidae</taxon>
        <taxon>Xylariales</taxon>
        <taxon>Hypoxylaceae</taxon>
        <taxon>Annulohypoxylon</taxon>
    </lineage>
</organism>
<keyword id="KW-0328">Glycosyltransferase</keyword>
<keyword id="KW-0808">Transferase</keyword>
<dbReference type="EC" id="2.4.1.-" evidence="2"/>
<dbReference type="EMBL" id="MT383109">
    <property type="protein sequence ID" value="QOE88884.1"/>
    <property type="molecule type" value="Genomic_DNA"/>
</dbReference>
<dbReference type="GO" id="GO:0016020">
    <property type="term" value="C:membrane"/>
    <property type="evidence" value="ECO:0007669"/>
    <property type="project" value="GOC"/>
</dbReference>
<dbReference type="GO" id="GO:0000030">
    <property type="term" value="F:mannosyltransferase activity"/>
    <property type="evidence" value="ECO:0007669"/>
    <property type="project" value="TreeGrafter"/>
</dbReference>
<dbReference type="GO" id="GO:0051999">
    <property type="term" value="P:mannosyl-inositol phosphorylceramide biosynthetic process"/>
    <property type="evidence" value="ECO:0007669"/>
    <property type="project" value="TreeGrafter"/>
</dbReference>
<dbReference type="Gene3D" id="3.90.550.20">
    <property type="match status" value="1"/>
</dbReference>
<dbReference type="InterPro" id="IPR008441">
    <property type="entry name" value="AfumC-like_glycosyl_Trfase"/>
</dbReference>
<dbReference type="InterPro" id="IPR051706">
    <property type="entry name" value="Glycosyltransferase_domain"/>
</dbReference>
<dbReference type="InterPro" id="IPR029044">
    <property type="entry name" value="Nucleotide-diphossugar_trans"/>
</dbReference>
<dbReference type="PANTHER" id="PTHR32385:SF15">
    <property type="entry name" value="INOSITOL PHOSPHOCERAMIDE MANNOSYLTRANSFERASE 1"/>
    <property type="match status" value="1"/>
</dbReference>
<dbReference type="PANTHER" id="PTHR32385">
    <property type="entry name" value="MANNOSYL PHOSPHORYLINOSITOL CERAMIDE SYNTHASE"/>
    <property type="match status" value="1"/>
</dbReference>
<dbReference type="Pfam" id="PF05704">
    <property type="entry name" value="Caps_synth"/>
    <property type="match status" value="1"/>
</dbReference>
<dbReference type="SUPFAM" id="SSF53448">
    <property type="entry name" value="Nucleotide-diphospho-sugar transferases"/>
    <property type="match status" value="1"/>
</dbReference>
<name>BRAB_ANNTR</name>
<evidence type="ECO:0000256" key="1">
    <source>
        <dbReference type="SAM" id="MobiDB-lite"/>
    </source>
</evidence>
<evidence type="ECO:0000269" key="2">
    <source>
    </source>
</evidence>
<evidence type="ECO:0000303" key="3">
    <source>
    </source>
</evidence>
<evidence type="ECO:0000305" key="4"/>
<accession>P9WER1</accession>
<accession>A0A866WL92</accession>